<sequence>MSRAKAKDPRFPDFSFTVVEGARATRVPGGRTIEEIEPEYKIKGRTTFSAIFRYDPFDFWVGPFYVGFWGFVSVIGIIFGSYFYINETILKGPYSIPQNFFAGRIDPPPPELGLGFAAPGEPGFAWQMTVLFATIAFFGWMMRQVDISMKLDMGYHVPIAFGVAFSAWLVLQVIRPIALGMWHEGFVLGIMPHLDWVSNFGYRYNNFFYNPFHAIGITGLFASTWLLACHGSLILSAAQYRGPEGGDIENVFFRDVQYYSVGESGVHRLGYIFAIGGILSADLCILLSGWPVQDWVSFWNFWNNLPFWSGV</sequence>
<accession>P11695</accession>
<accession>A9WII4</accession>
<organism>
    <name type="scientific">Chloroflexus aurantiacus (strain ATCC 29366 / DSM 635 / J-10-fl)</name>
    <dbReference type="NCBI Taxonomy" id="324602"/>
    <lineage>
        <taxon>Bacteria</taxon>
        <taxon>Bacillati</taxon>
        <taxon>Chloroflexota</taxon>
        <taxon>Chloroflexia</taxon>
        <taxon>Chloroflexales</taxon>
        <taxon>Chloroflexineae</taxon>
        <taxon>Chloroflexaceae</taxon>
        <taxon>Chloroflexus</taxon>
    </lineage>
</organism>
<feature type="initiator methionine" description="Removed">
    <location>
        <position position="1"/>
    </location>
</feature>
<feature type="chain" id="PRO_0000090400" description="Reaction center protein L chain">
    <location>
        <begin position="2"/>
        <end position="311"/>
    </location>
</feature>
<feature type="transmembrane region" description="Helical">
    <location>
        <begin position="68"/>
        <end position="90"/>
    </location>
</feature>
<feature type="transmembrane region" description="Helical">
    <location>
        <begin position="123"/>
        <end position="151"/>
    </location>
</feature>
<feature type="transmembrane region" description="Helical">
    <location>
        <begin position="156"/>
        <end position="178"/>
    </location>
</feature>
<feature type="transmembrane region" description="Helical">
    <location>
        <begin position="211"/>
        <end position="238"/>
    </location>
</feature>
<feature type="transmembrane region" description="Helical">
    <location>
        <begin position="262"/>
        <end position="287"/>
    </location>
</feature>
<feature type="binding site" description="axial binding residue">
    <location>
        <position position="183"/>
    </location>
    <ligand>
        <name>(7R,8Z)-bacteriochlorophyll b</name>
        <dbReference type="ChEBI" id="CHEBI:30034"/>
    </ligand>
    <ligandPart>
        <name>Mg</name>
        <dbReference type="ChEBI" id="CHEBI:25107"/>
    </ligandPart>
</feature>
<feature type="binding site" description="axial binding residue">
    <location>
        <position position="213"/>
    </location>
    <ligand>
        <name>(7R,8Z)-bacteriochlorophyll b</name>
        <dbReference type="ChEBI" id="CHEBI:30034"/>
    </ligand>
    <ligandPart>
        <name>Mg</name>
        <dbReference type="ChEBI" id="CHEBI:25107"/>
    </ligandPart>
</feature>
<feature type="binding site">
    <location>
        <position position="230"/>
    </location>
    <ligand>
        <name>Fe cation</name>
        <dbReference type="ChEBI" id="CHEBI:24875"/>
    </ligand>
</feature>
<feature type="binding site">
    <location>
        <position position="253"/>
    </location>
    <ligand>
        <name>a ubiquinone</name>
        <dbReference type="ChEBI" id="CHEBI:16389"/>
    </ligand>
</feature>
<feature type="binding site">
    <location>
        <position position="267"/>
    </location>
    <ligand>
        <name>Fe cation</name>
        <dbReference type="ChEBI" id="CHEBI:24875"/>
    </ligand>
</feature>
<dbReference type="EMBL" id="X14979">
    <property type="protein sequence ID" value="CAA33102.1"/>
    <property type="molecule type" value="Genomic_DNA"/>
</dbReference>
<dbReference type="EMBL" id="CP000909">
    <property type="protein sequence ID" value="ABY34284.1"/>
    <property type="molecule type" value="Genomic_DNA"/>
</dbReference>
<dbReference type="PIR" id="S03566">
    <property type="entry name" value="WNJXL"/>
</dbReference>
<dbReference type="RefSeq" id="WP_012256940.1">
    <property type="nucleotide sequence ID" value="NC_010175.1"/>
</dbReference>
<dbReference type="RefSeq" id="YP_001634673.1">
    <property type="nucleotide sequence ID" value="NC_010175.1"/>
</dbReference>
<dbReference type="PDB" id="8YDM">
    <property type="method" value="EM"/>
    <property type="resolution" value="3.05 A"/>
    <property type="chains" value="L=1-311"/>
</dbReference>
<dbReference type="PDBsum" id="8YDM"/>
<dbReference type="EMDB" id="EMD-39177"/>
<dbReference type="SMR" id="P11695"/>
<dbReference type="STRING" id="324602.Caur_1052"/>
<dbReference type="EnsemblBacteria" id="ABY34284">
    <property type="protein sequence ID" value="ABY34284"/>
    <property type="gene ID" value="Caur_1052"/>
</dbReference>
<dbReference type="KEGG" id="cau:Caur_1052"/>
<dbReference type="PATRIC" id="fig|324602.8.peg.1199"/>
<dbReference type="eggNOG" id="ENOG502Z87P">
    <property type="taxonomic scope" value="Bacteria"/>
</dbReference>
<dbReference type="HOGENOM" id="CLU_078782_0_0_0"/>
<dbReference type="InParanoid" id="P11695"/>
<dbReference type="Proteomes" id="UP000002008">
    <property type="component" value="Chromosome"/>
</dbReference>
<dbReference type="GO" id="GO:0009523">
    <property type="term" value="C:photosystem II"/>
    <property type="evidence" value="ECO:0000318"/>
    <property type="project" value="GO_Central"/>
</dbReference>
<dbReference type="GO" id="GO:0005886">
    <property type="term" value="C:plasma membrane"/>
    <property type="evidence" value="ECO:0007669"/>
    <property type="project" value="UniProtKB-SubCell"/>
</dbReference>
<dbReference type="GO" id="GO:0030077">
    <property type="term" value="C:plasma membrane light-harvesting complex"/>
    <property type="evidence" value="ECO:0007669"/>
    <property type="project" value="InterPro"/>
</dbReference>
<dbReference type="GO" id="GO:0042314">
    <property type="term" value="F:bacteriochlorophyll binding"/>
    <property type="evidence" value="ECO:0007669"/>
    <property type="project" value="UniProtKB-KW"/>
</dbReference>
<dbReference type="GO" id="GO:0045156">
    <property type="term" value="F:electron transporter, transferring electrons within the cyclic electron transport pathway of photosynthesis activity"/>
    <property type="evidence" value="ECO:0007669"/>
    <property type="project" value="InterPro"/>
</dbReference>
<dbReference type="GO" id="GO:0046872">
    <property type="term" value="F:metal ion binding"/>
    <property type="evidence" value="ECO:0007669"/>
    <property type="project" value="UniProtKB-KW"/>
</dbReference>
<dbReference type="GO" id="GO:0009772">
    <property type="term" value="P:photosynthetic electron transport in photosystem II"/>
    <property type="evidence" value="ECO:0007669"/>
    <property type="project" value="InterPro"/>
</dbReference>
<dbReference type="CDD" id="cd09290">
    <property type="entry name" value="Photo-RC_L"/>
    <property type="match status" value="1"/>
</dbReference>
<dbReference type="Gene3D" id="1.20.85.10">
    <property type="entry name" value="Photosystem II protein D1-like"/>
    <property type="match status" value="2"/>
</dbReference>
<dbReference type="InterPro" id="IPR036854">
    <property type="entry name" value="Photo_II_D1/D2_sf"/>
</dbReference>
<dbReference type="InterPro" id="IPR005871">
    <property type="entry name" value="Photo_RC_L"/>
</dbReference>
<dbReference type="InterPro" id="IPR000484">
    <property type="entry name" value="Photo_RC_L/M"/>
</dbReference>
<dbReference type="InterPro" id="IPR055265">
    <property type="entry name" value="Photo_RC_L/M_CS"/>
</dbReference>
<dbReference type="Pfam" id="PF00124">
    <property type="entry name" value="Photo_RC"/>
    <property type="match status" value="1"/>
</dbReference>
<dbReference type="PRINTS" id="PR00256">
    <property type="entry name" value="REACTNCENTRE"/>
</dbReference>
<dbReference type="SUPFAM" id="SSF81483">
    <property type="entry name" value="Bacterial photosystem II reaction centre, L and M subunits"/>
    <property type="match status" value="1"/>
</dbReference>
<dbReference type="PROSITE" id="PS00244">
    <property type="entry name" value="REACTION_CENTER"/>
    <property type="match status" value="1"/>
</dbReference>
<gene>
    <name type="primary">pufL</name>
    <name type="ordered locus">Caur_1052</name>
</gene>
<comment type="function">
    <text>The reaction center is a membrane-bound complex that mediates the initial photochemical event in the electron transfer process of photosynthesis.</text>
</comment>
<comment type="subunit">
    <text>Reaction center is composed of four bacteriochlorophylls, two bacteriopheophytins, two ubiquinones, one iron, and two highly hydrophobic polypeptide chains (designated L and M).</text>
</comment>
<comment type="subcellular location">
    <subcellularLocation>
        <location>Cell membrane</location>
        <topology>Multi-pass membrane protein</topology>
    </subcellularLocation>
</comment>
<comment type="similarity">
    <text evidence="1">Belongs to the reaction center PufL/M/PsbA/D family.</text>
</comment>
<keyword id="KW-0002">3D-structure</keyword>
<keyword id="KW-0076">Bacteriochlorophyll</keyword>
<keyword id="KW-1003">Cell membrane</keyword>
<keyword id="KW-0148">Chlorophyll</keyword>
<keyword id="KW-0157">Chromophore</keyword>
<keyword id="KW-0903">Direct protein sequencing</keyword>
<keyword id="KW-0249">Electron transport</keyword>
<keyword id="KW-0408">Iron</keyword>
<keyword id="KW-0460">Magnesium</keyword>
<keyword id="KW-0472">Membrane</keyword>
<keyword id="KW-0479">Metal-binding</keyword>
<keyword id="KW-0602">Photosynthesis</keyword>
<keyword id="KW-0674">Reaction center</keyword>
<keyword id="KW-1185">Reference proteome</keyword>
<keyword id="KW-0812">Transmembrane</keyword>
<keyword id="KW-1133">Transmembrane helix</keyword>
<keyword id="KW-0813">Transport</keyword>
<name>RCEL_CHLAA</name>
<protein>
    <recommendedName>
        <fullName>Reaction center protein L chain</fullName>
    </recommendedName>
    <alternativeName>
        <fullName>Photosynthetic reaction center L subunit</fullName>
    </alternativeName>
</protein>
<proteinExistence type="evidence at protein level"/>
<evidence type="ECO:0000305" key="1"/>
<reference key="1">
    <citation type="journal article" date="1988" name="FEBS Lett.">
        <title>Photosynthetic reaction centre of Chloroflexus aurantiacus. I. Primary structure of L-subunit.</title>
        <authorList>
            <person name="Ovchinnikov Y.A."/>
            <person name="Abdulaev N.G."/>
            <person name="Zolotarev A.S."/>
            <person name="Shmukler B.E."/>
            <person name="Zargarov A.A."/>
            <person name="Kutuzov M.A."/>
            <person name="Telezhinskaya I.N."/>
            <person name="Levina N.B."/>
        </authorList>
    </citation>
    <scope>NUCLEOTIDE SEQUENCE [GENOMIC DNA]</scope>
    <scope>PARTIAL PROTEIN SEQUENCE</scope>
</reference>
<reference key="2">
    <citation type="journal article" date="1989" name="Eur. J. Biochem.">
        <title>The primary structure of the Chloroflexus aurantiacus reaction-center polypeptides.</title>
        <authorList>
            <person name="Shiozawa J.A."/>
            <person name="Lottspeich F."/>
            <person name="Oesterhelt D."/>
            <person name="Feick R."/>
        </authorList>
    </citation>
    <scope>NUCLEOTIDE SEQUENCE [GENOMIC DNA]</scope>
</reference>
<reference key="3">
    <citation type="journal article" date="2011" name="BMC Genomics">
        <title>Complete genome sequence of the filamentous anoxygenic phototrophic bacterium Chloroflexus aurantiacus.</title>
        <authorList>
            <person name="Tang K.H."/>
            <person name="Barry K."/>
            <person name="Chertkov O."/>
            <person name="Dalin E."/>
            <person name="Han C.S."/>
            <person name="Hauser L.J."/>
            <person name="Honchak B.M."/>
            <person name="Karbach L.E."/>
            <person name="Land M.L."/>
            <person name="Lapidus A."/>
            <person name="Larimer F.W."/>
            <person name="Mikhailova N."/>
            <person name="Pitluck S."/>
            <person name="Pierson B.K."/>
            <person name="Blankenship R.E."/>
        </authorList>
    </citation>
    <scope>NUCLEOTIDE SEQUENCE [LARGE SCALE GENOMIC DNA]</scope>
    <source>
        <strain>ATCC 29366 / DSM 635 / J-10-fl</strain>
    </source>
</reference>